<protein>
    <recommendedName>
        <fullName evidence="1">Small ribosomal subunit protein uS11</fullName>
    </recommendedName>
    <alternativeName>
        <fullName evidence="2">30S ribosomal protein S11</fullName>
    </alternativeName>
</protein>
<dbReference type="EMBL" id="CP001101">
    <property type="protein sequence ID" value="ACE05175.1"/>
    <property type="molecule type" value="Genomic_DNA"/>
</dbReference>
<dbReference type="SMR" id="B3EP36"/>
<dbReference type="STRING" id="331678.Cphamn1_2271"/>
<dbReference type="KEGG" id="cpb:Cphamn1_2271"/>
<dbReference type="eggNOG" id="COG0100">
    <property type="taxonomic scope" value="Bacteria"/>
</dbReference>
<dbReference type="HOGENOM" id="CLU_072439_5_0_10"/>
<dbReference type="OrthoDB" id="9806415at2"/>
<dbReference type="GO" id="GO:1990904">
    <property type="term" value="C:ribonucleoprotein complex"/>
    <property type="evidence" value="ECO:0007669"/>
    <property type="project" value="UniProtKB-KW"/>
</dbReference>
<dbReference type="GO" id="GO:0005840">
    <property type="term" value="C:ribosome"/>
    <property type="evidence" value="ECO:0007669"/>
    <property type="project" value="UniProtKB-KW"/>
</dbReference>
<dbReference type="GO" id="GO:0019843">
    <property type="term" value="F:rRNA binding"/>
    <property type="evidence" value="ECO:0007669"/>
    <property type="project" value="UniProtKB-UniRule"/>
</dbReference>
<dbReference type="GO" id="GO:0003735">
    <property type="term" value="F:structural constituent of ribosome"/>
    <property type="evidence" value="ECO:0007669"/>
    <property type="project" value="InterPro"/>
</dbReference>
<dbReference type="GO" id="GO:0006412">
    <property type="term" value="P:translation"/>
    <property type="evidence" value="ECO:0007669"/>
    <property type="project" value="UniProtKB-UniRule"/>
</dbReference>
<dbReference type="FunFam" id="3.30.420.80:FF:000004">
    <property type="entry name" value="30S ribosomal protein S11"/>
    <property type="match status" value="1"/>
</dbReference>
<dbReference type="Gene3D" id="3.30.420.80">
    <property type="entry name" value="Ribosomal protein S11"/>
    <property type="match status" value="1"/>
</dbReference>
<dbReference type="HAMAP" id="MF_01310">
    <property type="entry name" value="Ribosomal_uS11"/>
    <property type="match status" value="1"/>
</dbReference>
<dbReference type="InterPro" id="IPR001971">
    <property type="entry name" value="Ribosomal_uS11"/>
</dbReference>
<dbReference type="InterPro" id="IPR019981">
    <property type="entry name" value="Ribosomal_uS11_bac-type"/>
</dbReference>
<dbReference type="InterPro" id="IPR018102">
    <property type="entry name" value="Ribosomal_uS11_CS"/>
</dbReference>
<dbReference type="InterPro" id="IPR036967">
    <property type="entry name" value="Ribosomal_uS11_sf"/>
</dbReference>
<dbReference type="NCBIfam" id="NF003698">
    <property type="entry name" value="PRK05309.1"/>
    <property type="match status" value="1"/>
</dbReference>
<dbReference type="NCBIfam" id="TIGR03632">
    <property type="entry name" value="uS11_bact"/>
    <property type="match status" value="1"/>
</dbReference>
<dbReference type="PANTHER" id="PTHR11759">
    <property type="entry name" value="40S RIBOSOMAL PROTEIN S14/30S RIBOSOMAL PROTEIN S11"/>
    <property type="match status" value="1"/>
</dbReference>
<dbReference type="Pfam" id="PF00411">
    <property type="entry name" value="Ribosomal_S11"/>
    <property type="match status" value="1"/>
</dbReference>
<dbReference type="PIRSF" id="PIRSF002131">
    <property type="entry name" value="Ribosomal_S11"/>
    <property type="match status" value="1"/>
</dbReference>
<dbReference type="SUPFAM" id="SSF53137">
    <property type="entry name" value="Translational machinery components"/>
    <property type="match status" value="1"/>
</dbReference>
<dbReference type="PROSITE" id="PS00054">
    <property type="entry name" value="RIBOSOMAL_S11"/>
    <property type="match status" value="1"/>
</dbReference>
<accession>B3EP36</accession>
<keyword id="KW-0687">Ribonucleoprotein</keyword>
<keyword id="KW-0689">Ribosomal protein</keyword>
<keyword id="KW-0694">RNA-binding</keyword>
<keyword id="KW-0699">rRNA-binding</keyword>
<organism>
    <name type="scientific">Chlorobium phaeobacteroides (strain BS1)</name>
    <dbReference type="NCBI Taxonomy" id="331678"/>
    <lineage>
        <taxon>Bacteria</taxon>
        <taxon>Pseudomonadati</taxon>
        <taxon>Chlorobiota</taxon>
        <taxon>Chlorobiia</taxon>
        <taxon>Chlorobiales</taxon>
        <taxon>Chlorobiaceae</taxon>
        <taxon>Chlorobium/Pelodictyon group</taxon>
        <taxon>Chlorobium</taxon>
    </lineage>
</organism>
<proteinExistence type="inferred from homology"/>
<evidence type="ECO:0000255" key="1">
    <source>
        <dbReference type="HAMAP-Rule" id="MF_01310"/>
    </source>
</evidence>
<evidence type="ECO:0000305" key="2"/>
<comment type="function">
    <text evidence="1">Located on the platform of the 30S subunit, it bridges several disparate RNA helices of the 16S rRNA. Forms part of the Shine-Dalgarno cleft in the 70S ribosome.</text>
</comment>
<comment type="subunit">
    <text evidence="1">Part of the 30S ribosomal subunit. Interacts with proteins S7 and S18. Binds to IF-3.</text>
</comment>
<comment type="similarity">
    <text evidence="1">Belongs to the universal ribosomal protein uS11 family.</text>
</comment>
<reference key="1">
    <citation type="submission" date="2008-06" db="EMBL/GenBank/DDBJ databases">
        <title>Complete sequence of Chlorobium phaeobacteroides BS1.</title>
        <authorList>
            <consortium name="US DOE Joint Genome Institute"/>
            <person name="Lucas S."/>
            <person name="Copeland A."/>
            <person name="Lapidus A."/>
            <person name="Glavina del Rio T."/>
            <person name="Dalin E."/>
            <person name="Tice H."/>
            <person name="Bruce D."/>
            <person name="Goodwin L."/>
            <person name="Pitluck S."/>
            <person name="Schmutz J."/>
            <person name="Larimer F."/>
            <person name="Land M."/>
            <person name="Hauser L."/>
            <person name="Kyrpides N."/>
            <person name="Ovchinnikova G."/>
            <person name="Li T."/>
            <person name="Liu Z."/>
            <person name="Zhao F."/>
            <person name="Overmann J."/>
            <person name="Bryant D.A."/>
            <person name="Richardson P."/>
        </authorList>
    </citation>
    <scope>NUCLEOTIDE SEQUENCE [LARGE SCALE GENOMIC DNA]</scope>
    <source>
        <strain>BS1</strain>
    </source>
</reference>
<name>RS11_CHLPB</name>
<feature type="chain" id="PRO_1000141068" description="Small ribosomal subunit protein uS11">
    <location>
        <begin position="1"/>
        <end position="127"/>
    </location>
</feature>
<sequence>MATTSRKKKKVKVTPEGTVHIKASFNNVLVTITDMQGNTVSWSSAGKNGFKGSKKNTPYASQITSESAAKEAYDLGMRYVHVFIKGPGSGRDAAIRALQGAGLEVRSIKDITPLPHNGCRPPKRRRV</sequence>
<gene>
    <name evidence="1" type="primary">rpsK</name>
    <name type="ordered locus">Cphamn1_2271</name>
</gene>